<sequence length="332" mass="36590">MKVTFEQLKAAFNRVLISRGVDSETADACAEMFARTTESGVYSHGVNRFPRFIQQLENGDIIPDAQPKRITSLGAIEQWDAQRSIGNLTAKKMMDRAIELAADHGIGLVALRNANHWMRGGSYGWQAAEKGYIGICWTNSIAVMPPWGAKECRIGTNPLIVAIPSTPITMVDMSMSMFSYGMLEVNRLAGRQLPVDGGFDDEGNLTKEPGVIEKNRRILPMGYWKGSGMSIVLDMIATLLSDGASVAEVTEDNSDEYGISQIFIAIEVDKLIDGPTRDAKLQRIMDYVTSAERADENQSIRLPGHEFTTLLAENRRNGITVDDSVWAKIQAL</sequence>
<protein>
    <recommendedName>
        <fullName evidence="1">2,3-diketo-L-gulonate reductase</fullName>
        <shortName evidence="1">2,3-DKG reductase</shortName>
        <ecNumber evidence="1">1.1.1.130</ecNumber>
    </recommendedName>
    <alternativeName>
        <fullName evidence="1">3-dehydro-L-gulonate 2-dehydrogenase</fullName>
    </alternativeName>
</protein>
<name>DLGD_ECO27</name>
<evidence type="ECO:0000255" key="1">
    <source>
        <dbReference type="HAMAP-Rule" id="MF_00820"/>
    </source>
</evidence>
<dbReference type="EC" id="1.1.1.130" evidence="1"/>
<dbReference type="EMBL" id="FM180568">
    <property type="protein sequence ID" value="CAS11375.1"/>
    <property type="molecule type" value="Genomic_DNA"/>
</dbReference>
<dbReference type="SMR" id="B7ULD6"/>
<dbReference type="KEGG" id="ecg:E2348C_3827"/>
<dbReference type="HOGENOM" id="CLU_040452_4_0_6"/>
<dbReference type="Proteomes" id="UP000008205">
    <property type="component" value="Chromosome"/>
</dbReference>
<dbReference type="GO" id="GO:0005737">
    <property type="term" value="C:cytoplasm"/>
    <property type="evidence" value="ECO:0007669"/>
    <property type="project" value="UniProtKB-SubCell"/>
</dbReference>
<dbReference type="GO" id="GO:0047559">
    <property type="term" value="F:3-dehydro-L-gulonate 2-dehydrogenase activity"/>
    <property type="evidence" value="ECO:0007669"/>
    <property type="project" value="UniProtKB-UniRule"/>
</dbReference>
<dbReference type="GO" id="GO:0070403">
    <property type="term" value="F:NAD+ binding"/>
    <property type="evidence" value="ECO:0007669"/>
    <property type="project" value="InterPro"/>
</dbReference>
<dbReference type="FunFam" id="1.10.1530.10:FF:000001">
    <property type="entry name" value="2,3-diketo-L-gulonate reductase"/>
    <property type="match status" value="1"/>
</dbReference>
<dbReference type="Gene3D" id="1.10.1530.10">
    <property type="match status" value="1"/>
</dbReference>
<dbReference type="Gene3D" id="3.30.1370.60">
    <property type="entry name" value="Hypothetical oxidoreductase yiak, domain 2"/>
    <property type="match status" value="1"/>
</dbReference>
<dbReference type="Gene3D" id="3.30.60.50">
    <property type="entry name" value="Hypothetical oxidoreductase yiak, domain 3"/>
    <property type="match status" value="1"/>
</dbReference>
<dbReference type="HAMAP" id="MF_00820">
    <property type="entry name" value="Diketo_gul_reduc"/>
    <property type="match status" value="1"/>
</dbReference>
<dbReference type="InterPro" id="IPR023689">
    <property type="entry name" value="Diketo_gul_Rdtase"/>
</dbReference>
<dbReference type="InterPro" id="IPR043144">
    <property type="entry name" value="Mal/L-sulf/L-lact_DH-like_ah"/>
</dbReference>
<dbReference type="InterPro" id="IPR043143">
    <property type="entry name" value="Mal/L-sulf/L-lact_DH-like_NADP"/>
</dbReference>
<dbReference type="InterPro" id="IPR036111">
    <property type="entry name" value="Mal/L-sulfo/L-lacto_DH-like_sf"/>
</dbReference>
<dbReference type="InterPro" id="IPR003767">
    <property type="entry name" value="Malate/L-lactate_DH-like"/>
</dbReference>
<dbReference type="NCBIfam" id="NF009750">
    <property type="entry name" value="PRK13260.1"/>
    <property type="match status" value="1"/>
</dbReference>
<dbReference type="PANTHER" id="PTHR11091:SF3">
    <property type="entry name" value="2,3-DIKETO-L-GULONATE REDUCTASE"/>
    <property type="match status" value="1"/>
</dbReference>
<dbReference type="PANTHER" id="PTHR11091">
    <property type="entry name" value="OXIDOREDUCTASE-RELATED"/>
    <property type="match status" value="1"/>
</dbReference>
<dbReference type="Pfam" id="PF02615">
    <property type="entry name" value="Ldh_2"/>
    <property type="match status" value="1"/>
</dbReference>
<dbReference type="SUPFAM" id="SSF89733">
    <property type="entry name" value="L-sulfolactate dehydrogenase-like"/>
    <property type="match status" value="1"/>
</dbReference>
<comment type="function">
    <text evidence="1">Catalyzes the reduction of 2,3-diketo-L-gulonate in the presence of NADH, to form 3-keto-L-gulonate.</text>
</comment>
<comment type="catalytic activity">
    <reaction evidence="1">
        <text>3-dehydro-L-gulonate + NAD(+) = 2,3-dioxo-L-gulonate + NADH + H(+)</text>
        <dbReference type="Rhea" id="RHEA:21924"/>
        <dbReference type="ChEBI" id="CHEBI:15378"/>
        <dbReference type="ChEBI" id="CHEBI:57441"/>
        <dbReference type="ChEBI" id="CHEBI:57540"/>
        <dbReference type="ChEBI" id="CHEBI:57655"/>
        <dbReference type="ChEBI" id="CHEBI:57945"/>
        <dbReference type="EC" id="1.1.1.130"/>
    </reaction>
</comment>
<comment type="catalytic activity">
    <reaction evidence="1">
        <text>3-dehydro-L-gulonate + NADP(+) = 2,3-dioxo-L-gulonate + NADPH + H(+)</text>
        <dbReference type="Rhea" id="RHEA:21928"/>
        <dbReference type="ChEBI" id="CHEBI:15378"/>
        <dbReference type="ChEBI" id="CHEBI:57441"/>
        <dbReference type="ChEBI" id="CHEBI:57655"/>
        <dbReference type="ChEBI" id="CHEBI:57783"/>
        <dbReference type="ChEBI" id="CHEBI:58349"/>
        <dbReference type="EC" id="1.1.1.130"/>
    </reaction>
</comment>
<comment type="subunit">
    <text evidence="1">Homodimer.</text>
</comment>
<comment type="subcellular location">
    <subcellularLocation>
        <location evidence="1">Cytoplasm</location>
    </subcellularLocation>
</comment>
<comment type="similarity">
    <text evidence="1">Belongs to the LDH2/MDH2 oxidoreductase family. DlgD subfamily.</text>
</comment>
<organism>
    <name type="scientific">Escherichia coli O127:H6 (strain E2348/69 / EPEC)</name>
    <dbReference type="NCBI Taxonomy" id="574521"/>
    <lineage>
        <taxon>Bacteria</taxon>
        <taxon>Pseudomonadati</taxon>
        <taxon>Pseudomonadota</taxon>
        <taxon>Gammaproteobacteria</taxon>
        <taxon>Enterobacterales</taxon>
        <taxon>Enterobacteriaceae</taxon>
        <taxon>Escherichia</taxon>
    </lineage>
</organism>
<gene>
    <name evidence="1" type="primary">dlgD</name>
    <name type="ordered locus">E2348C_3827</name>
</gene>
<keyword id="KW-0963">Cytoplasm</keyword>
<keyword id="KW-0520">NAD</keyword>
<keyword id="KW-0560">Oxidoreductase</keyword>
<keyword id="KW-1185">Reference proteome</keyword>
<proteinExistence type="inferred from homology"/>
<accession>B7ULD6</accession>
<reference key="1">
    <citation type="journal article" date="2009" name="J. Bacteriol.">
        <title>Complete genome sequence and comparative genome analysis of enteropathogenic Escherichia coli O127:H6 strain E2348/69.</title>
        <authorList>
            <person name="Iguchi A."/>
            <person name="Thomson N.R."/>
            <person name="Ogura Y."/>
            <person name="Saunders D."/>
            <person name="Ooka T."/>
            <person name="Henderson I.R."/>
            <person name="Harris D."/>
            <person name="Asadulghani M."/>
            <person name="Kurokawa K."/>
            <person name="Dean P."/>
            <person name="Kenny B."/>
            <person name="Quail M.A."/>
            <person name="Thurston S."/>
            <person name="Dougan G."/>
            <person name="Hayashi T."/>
            <person name="Parkhill J."/>
            <person name="Frankel G."/>
        </authorList>
    </citation>
    <scope>NUCLEOTIDE SEQUENCE [LARGE SCALE GENOMIC DNA]</scope>
    <source>
        <strain>E2348/69 / EPEC</strain>
    </source>
</reference>
<feature type="chain" id="PRO_1000148688" description="2,3-diketo-L-gulonate reductase">
    <location>
        <begin position="1"/>
        <end position="332"/>
    </location>
</feature>
<feature type="active site" description="Proton donor" evidence="1">
    <location>
        <position position="44"/>
    </location>
</feature>
<feature type="binding site" evidence="1">
    <location>
        <begin position="168"/>
        <end position="174"/>
    </location>
    <ligand>
        <name>NAD(+)</name>
        <dbReference type="ChEBI" id="CHEBI:57540"/>
    </ligand>
</feature>
<feature type="binding site" evidence="1">
    <location>
        <begin position="224"/>
        <end position="225"/>
    </location>
    <ligand>
        <name>NAD(+)</name>
        <dbReference type="ChEBI" id="CHEBI:57540"/>
    </ligand>
</feature>
<feature type="binding site" evidence="1">
    <location>
        <begin position="304"/>
        <end position="306"/>
    </location>
    <ligand>
        <name>NAD(+)</name>
        <dbReference type="ChEBI" id="CHEBI:57540"/>
    </ligand>
</feature>